<reference key="1">
    <citation type="journal article" date="2006" name="Proc. Natl. Acad. Sci. U.S.A.">
        <title>Comparative genomics of the lactic acid bacteria.</title>
        <authorList>
            <person name="Makarova K.S."/>
            <person name="Slesarev A."/>
            <person name="Wolf Y.I."/>
            <person name="Sorokin A."/>
            <person name="Mirkin B."/>
            <person name="Koonin E.V."/>
            <person name="Pavlov A."/>
            <person name="Pavlova N."/>
            <person name="Karamychev V."/>
            <person name="Polouchine N."/>
            <person name="Shakhova V."/>
            <person name="Grigoriev I."/>
            <person name="Lou Y."/>
            <person name="Rohksar D."/>
            <person name="Lucas S."/>
            <person name="Huang K."/>
            <person name="Goodstein D.M."/>
            <person name="Hawkins T."/>
            <person name="Plengvidhya V."/>
            <person name="Welker D."/>
            <person name="Hughes J."/>
            <person name="Goh Y."/>
            <person name="Benson A."/>
            <person name="Baldwin K."/>
            <person name="Lee J.-H."/>
            <person name="Diaz-Muniz I."/>
            <person name="Dosti B."/>
            <person name="Smeianov V."/>
            <person name="Wechter W."/>
            <person name="Barabote R."/>
            <person name="Lorca G."/>
            <person name="Altermann E."/>
            <person name="Barrangou R."/>
            <person name="Ganesan B."/>
            <person name="Xie Y."/>
            <person name="Rawsthorne H."/>
            <person name="Tamir D."/>
            <person name="Parker C."/>
            <person name="Breidt F."/>
            <person name="Broadbent J.R."/>
            <person name="Hutkins R."/>
            <person name="O'Sullivan D."/>
            <person name="Steele J."/>
            <person name="Unlu G."/>
            <person name="Saier M.H. Jr."/>
            <person name="Klaenhammer T."/>
            <person name="Richardson P."/>
            <person name="Kozyavkin S."/>
            <person name="Weimer B.C."/>
            <person name="Mills D.A."/>
        </authorList>
    </citation>
    <scope>NUCLEOTIDE SEQUENCE [LARGE SCALE GENOMIC DNA]</scope>
    <source>
        <strain>ATCC BAA-365 / Lb-18</strain>
    </source>
</reference>
<accession>Q047M3</accession>
<comment type="function">
    <text evidence="1">Catalyzes the conversion of dihydroorotate to orotate with fumarate as the electron acceptor.</text>
</comment>
<comment type="catalytic activity">
    <reaction>
        <text>(S)-dihydroorotate + fumarate = orotate + succinate</text>
        <dbReference type="Rhea" id="RHEA:30059"/>
        <dbReference type="ChEBI" id="CHEBI:29806"/>
        <dbReference type="ChEBI" id="CHEBI:30031"/>
        <dbReference type="ChEBI" id="CHEBI:30839"/>
        <dbReference type="ChEBI" id="CHEBI:30864"/>
        <dbReference type="EC" id="1.3.98.1"/>
    </reaction>
</comment>
<comment type="cofactor">
    <cofactor evidence="1">
        <name>FMN</name>
        <dbReference type="ChEBI" id="CHEBI:58210"/>
    </cofactor>
    <text evidence="1">Binds 1 FMN per subunit.</text>
</comment>
<comment type="pathway">
    <text>Pyrimidine metabolism; UMP biosynthesis via de novo pathway.</text>
</comment>
<comment type="subunit">
    <text evidence="1">Homodimer.</text>
</comment>
<comment type="subcellular location">
    <subcellularLocation>
        <location evidence="1">Cytoplasm</location>
    </subcellularLocation>
</comment>
<comment type="similarity">
    <text evidence="2">Belongs to the dihydroorotate dehydrogenase family. Type 1 subfamily.</text>
</comment>
<proteinExistence type="inferred from homology"/>
<name>PYRDA_LACDB</name>
<dbReference type="EC" id="1.3.98.1"/>
<dbReference type="EMBL" id="CP000412">
    <property type="protein sequence ID" value="ABJ59349.1"/>
    <property type="molecule type" value="Genomic_DNA"/>
</dbReference>
<dbReference type="RefSeq" id="WP_011678674.1">
    <property type="nucleotide sequence ID" value="NC_008529.1"/>
</dbReference>
<dbReference type="SMR" id="Q047M3"/>
<dbReference type="KEGG" id="lbu:LBUL_1955"/>
<dbReference type="HOGENOM" id="CLU_042042_0_0_9"/>
<dbReference type="BioCyc" id="LDEL321956:LBUL_RS09235-MONOMER"/>
<dbReference type="UniPathway" id="UPA00070"/>
<dbReference type="GO" id="GO:0005737">
    <property type="term" value="C:cytoplasm"/>
    <property type="evidence" value="ECO:0007669"/>
    <property type="project" value="UniProtKB-SubCell"/>
</dbReference>
<dbReference type="GO" id="GO:1990663">
    <property type="term" value="F:dihydroorotate dehydrogenase (fumarate) activity"/>
    <property type="evidence" value="ECO:0007669"/>
    <property type="project" value="UniProtKB-EC"/>
</dbReference>
<dbReference type="GO" id="GO:0006207">
    <property type="term" value="P:'de novo' pyrimidine nucleobase biosynthetic process"/>
    <property type="evidence" value="ECO:0007669"/>
    <property type="project" value="InterPro"/>
</dbReference>
<dbReference type="GO" id="GO:0044205">
    <property type="term" value="P:'de novo' UMP biosynthetic process"/>
    <property type="evidence" value="ECO:0007669"/>
    <property type="project" value="UniProtKB-UniRule"/>
</dbReference>
<dbReference type="CDD" id="cd04740">
    <property type="entry name" value="DHOD_1B_like"/>
    <property type="match status" value="1"/>
</dbReference>
<dbReference type="FunFam" id="3.20.20.70:FF:000027">
    <property type="entry name" value="Dihydropyrimidine dehydrogenase [NADP(+)]"/>
    <property type="match status" value="1"/>
</dbReference>
<dbReference type="Gene3D" id="3.20.20.70">
    <property type="entry name" value="Aldolase class I"/>
    <property type="match status" value="1"/>
</dbReference>
<dbReference type="HAMAP" id="MF_00224">
    <property type="entry name" value="DHO_dh_type1"/>
    <property type="match status" value="1"/>
</dbReference>
<dbReference type="InterPro" id="IPR013785">
    <property type="entry name" value="Aldolase_TIM"/>
</dbReference>
<dbReference type="InterPro" id="IPR050074">
    <property type="entry name" value="DHO_dehydrogenase"/>
</dbReference>
<dbReference type="InterPro" id="IPR033888">
    <property type="entry name" value="DHOD_1B"/>
</dbReference>
<dbReference type="InterPro" id="IPR024920">
    <property type="entry name" value="Dihydroorotate_DH_1"/>
</dbReference>
<dbReference type="InterPro" id="IPR012135">
    <property type="entry name" value="Dihydroorotate_DH_1_2"/>
</dbReference>
<dbReference type="InterPro" id="IPR005720">
    <property type="entry name" value="Dihydroorotate_DH_cat"/>
</dbReference>
<dbReference type="InterPro" id="IPR001295">
    <property type="entry name" value="Dihydroorotate_DH_CS"/>
</dbReference>
<dbReference type="InterPro" id="IPR049622">
    <property type="entry name" value="Dihydroorotate_DH_I"/>
</dbReference>
<dbReference type="NCBIfam" id="NF005574">
    <property type="entry name" value="PRK07259.1"/>
    <property type="match status" value="1"/>
</dbReference>
<dbReference type="NCBIfam" id="TIGR01037">
    <property type="entry name" value="pyrD_sub1_fam"/>
    <property type="match status" value="1"/>
</dbReference>
<dbReference type="PANTHER" id="PTHR48109:SF1">
    <property type="entry name" value="DIHYDROOROTATE DEHYDROGENASE (FUMARATE)"/>
    <property type="match status" value="1"/>
</dbReference>
<dbReference type="PANTHER" id="PTHR48109">
    <property type="entry name" value="DIHYDROOROTATE DEHYDROGENASE (QUINONE), MITOCHONDRIAL-RELATED"/>
    <property type="match status" value="1"/>
</dbReference>
<dbReference type="Pfam" id="PF01180">
    <property type="entry name" value="DHO_dh"/>
    <property type="match status" value="1"/>
</dbReference>
<dbReference type="PIRSF" id="PIRSF000164">
    <property type="entry name" value="DHO_oxidase"/>
    <property type="match status" value="1"/>
</dbReference>
<dbReference type="SUPFAM" id="SSF51395">
    <property type="entry name" value="FMN-linked oxidoreductases"/>
    <property type="match status" value="1"/>
</dbReference>
<dbReference type="PROSITE" id="PS00912">
    <property type="entry name" value="DHODEHASE_2"/>
    <property type="match status" value="1"/>
</dbReference>
<keyword id="KW-0963">Cytoplasm</keyword>
<keyword id="KW-0285">Flavoprotein</keyword>
<keyword id="KW-0288">FMN</keyword>
<keyword id="KW-0560">Oxidoreductase</keyword>
<keyword id="KW-0665">Pyrimidine biosynthesis</keyword>
<feature type="chain" id="PRO_1000024136" description="Dihydroorotate dehydrogenase A (fumarate)">
    <location>
        <begin position="1"/>
        <end position="307"/>
    </location>
</feature>
<feature type="active site" description="Nucleophile">
    <location>
        <position position="133"/>
    </location>
</feature>
<feature type="binding site" evidence="1">
    <location>
        <position position="21"/>
    </location>
    <ligand>
        <name>FMN</name>
        <dbReference type="ChEBI" id="CHEBI:58210"/>
    </ligand>
</feature>
<feature type="binding site" evidence="1">
    <location>
        <begin position="46"/>
        <end position="47"/>
    </location>
    <ligand>
        <name>FMN</name>
        <dbReference type="ChEBI" id="CHEBI:58210"/>
    </ligand>
</feature>
<feature type="binding site" evidence="1">
    <location>
        <position position="46"/>
    </location>
    <ligand>
        <name>substrate</name>
    </ligand>
</feature>
<feature type="binding site" evidence="1">
    <location>
        <begin position="70"/>
        <end position="74"/>
    </location>
    <ligand>
        <name>substrate</name>
    </ligand>
</feature>
<feature type="binding site" evidence="1">
    <location>
        <position position="130"/>
    </location>
    <ligand>
        <name>FMN</name>
        <dbReference type="ChEBI" id="CHEBI:58210"/>
    </ligand>
</feature>
<feature type="binding site" evidence="1">
    <location>
        <position position="130"/>
    </location>
    <ligand>
        <name>substrate</name>
    </ligand>
</feature>
<feature type="binding site" evidence="1">
    <location>
        <position position="168"/>
    </location>
    <ligand>
        <name>FMN</name>
        <dbReference type="ChEBI" id="CHEBI:58210"/>
    </ligand>
</feature>
<feature type="binding site" evidence="1">
    <location>
        <position position="194"/>
    </location>
    <ligand>
        <name>FMN</name>
        <dbReference type="ChEBI" id="CHEBI:58210"/>
    </ligand>
</feature>
<feature type="binding site" evidence="1">
    <location>
        <begin position="195"/>
        <end position="196"/>
    </location>
    <ligand>
        <name>substrate</name>
    </ligand>
</feature>
<feature type="binding site" evidence="1">
    <location>
        <position position="220"/>
    </location>
    <ligand>
        <name>FMN</name>
        <dbReference type="ChEBI" id="CHEBI:58210"/>
    </ligand>
</feature>
<feature type="binding site" evidence="1">
    <location>
        <begin position="246"/>
        <end position="247"/>
    </location>
    <ligand>
        <name>FMN</name>
        <dbReference type="ChEBI" id="CHEBI:58210"/>
    </ligand>
</feature>
<feature type="binding site" evidence="1">
    <location>
        <begin position="268"/>
        <end position="269"/>
    </location>
    <ligand>
        <name>FMN</name>
        <dbReference type="ChEBI" id="CHEBI:58210"/>
    </ligand>
</feature>
<sequence length="307" mass="32181">MVNTHVNLPGLDLKNPVMPASGTFGFGDVPAAQKFDLNDLGAMVIKTTTPHATTGNPQPQIAILEDGVLNSVGLTNPGVDQVISEKLTKLRHQYIDLPIMASVGGDSEDDYVEVAKKLSASGLVNALEINVSCPNVAQGGMSFGVHAGVVEELTKKIKMAVALPIYVKLTPNVTDIVEIAKAAESGGADGISMINTVLGMRIDVKTRKPLLGHNMGGLSGEAVKPIAIRMISQVRQVTQLPIIGMGGISTAQDVIEFILAGANAVAVGSAHFEDELAAKHIAENLPAELEKLGIEDINDLVGQVKFN</sequence>
<gene>
    <name type="primary">pyrD</name>
    <name type="ordered locus">LBUL_1955</name>
</gene>
<evidence type="ECO:0000250" key="1"/>
<evidence type="ECO:0000305" key="2"/>
<protein>
    <recommendedName>
        <fullName>Dihydroorotate dehydrogenase A (fumarate)</fullName>
        <shortName>DHOD A</shortName>
        <shortName>DHODase A</shortName>
        <shortName>DHOdehase A</shortName>
        <ecNumber>1.3.98.1</ecNumber>
    </recommendedName>
</protein>
<organism>
    <name type="scientific">Lactobacillus delbrueckii subsp. bulgaricus (strain ATCC BAA-365 / Lb-18)</name>
    <dbReference type="NCBI Taxonomy" id="321956"/>
    <lineage>
        <taxon>Bacteria</taxon>
        <taxon>Bacillati</taxon>
        <taxon>Bacillota</taxon>
        <taxon>Bacilli</taxon>
        <taxon>Lactobacillales</taxon>
        <taxon>Lactobacillaceae</taxon>
        <taxon>Lactobacillus</taxon>
    </lineage>
</organism>